<protein>
    <recommendedName>
        <fullName>Insulin gene enhancer protein ISL-2</fullName>
        <shortName>Islet-2</shortName>
    </recommendedName>
</protein>
<name>ISL2_HUMAN</name>
<proteinExistence type="evidence at protein level"/>
<organism>
    <name type="scientific">Homo sapiens</name>
    <name type="common">Human</name>
    <dbReference type="NCBI Taxonomy" id="9606"/>
    <lineage>
        <taxon>Eukaryota</taxon>
        <taxon>Metazoa</taxon>
        <taxon>Chordata</taxon>
        <taxon>Craniata</taxon>
        <taxon>Vertebrata</taxon>
        <taxon>Euteleostomi</taxon>
        <taxon>Mammalia</taxon>
        <taxon>Eutheria</taxon>
        <taxon>Euarchontoglires</taxon>
        <taxon>Primates</taxon>
        <taxon>Haplorrhini</taxon>
        <taxon>Catarrhini</taxon>
        <taxon>Hominidae</taxon>
        <taxon>Homo</taxon>
    </lineage>
</organism>
<feature type="chain" id="PRO_0000075752" description="Insulin gene enhancer protein ISL-2">
    <location>
        <begin position="1"/>
        <end position="359"/>
    </location>
</feature>
<feature type="domain" description="LIM zinc-binding 1" evidence="3">
    <location>
        <begin position="25"/>
        <end position="86"/>
    </location>
</feature>
<feature type="domain" description="LIM zinc-binding 2" evidence="3">
    <location>
        <begin position="87"/>
        <end position="149"/>
    </location>
</feature>
<feature type="DNA-binding region" description="Homeobox" evidence="2">
    <location>
        <begin position="191"/>
        <end position="250"/>
    </location>
</feature>
<feature type="region of interest" description="Disordered" evidence="4">
    <location>
        <begin position="151"/>
        <end position="191"/>
    </location>
</feature>
<feature type="region of interest" description="LIM-binding domain (LID)" evidence="1">
    <location>
        <begin position="272"/>
        <end position="301"/>
    </location>
</feature>
<feature type="region of interest" description="Disordered" evidence="4">
    <location>
        <begin position="326"/>
        <end position="359"/>
    </location>
</feature>
<feature type="compositionally biased region" description="Low complexity" evidence="4">
    <location>
        <begin position="326"/>
        <end position="336"/>
    </location>
</feature>
<feature type="compositionally biased region" description="Polar residues" evidence="4">
    <location>
        <begin position="337"/>
        <end position="359"/>
    </location>
</feature>
<feature type="modified residue" description="Phosphoserine" evidence="6">
    <location>
        <position position="154"/>
    </location>
</feature>
<feature type="modified residue" description="Phosphoserine" evidence="6">
    <location>
        <position position="157"/>
    </location>
</feature>
<feature type="modified residue" description="Phosphoserine" evidence="5">
    <location>
        <position position="279"/>
    </location>
</feature>
<accession>Q96A47</accession>
<accession>B3KM37</accession>
<sequence length="359" mass="39768">MVDIIFHYPFLGAMGDHSKKKPGTAMCVGCGSQIHDQFILRVSPDLEWHAACLKCAECSQYLDETCTCFVRDGKTYCKRDYVRLFGIKCAKCQVGFSSSDLVMRARDSVYHIECFRCSVCSRQLLPGDEFSLREHELLCRADHGLLLERAAAGSPRSPGPLPGARGLHLPDAGSGRQPALRPHVHKQTEKTTRVRTVLNEKQLHTLRTCYAANPRPDALMKEQLVEMTGLSPRVIRVWFQNKRCKDKKKSILMKQLQQQQHSDKTSLQGLTGTPLVAGSPIRHENAVQGSAVEVQTYQPPWKALSEFALQSDLDQPAFQQLVSFSESGSLGNSSGSDVTSLSSQLPDTPNSMVPSPVET</sequence>
<reference key="1">
    <citation type="journal article" date="2004" name="Nat. Genet.">
        <title>Complete sequencing and characterization of 21,243 full-length human cDNAs.</title>
        <authorList>
            <person name="Ota T."/>
            <person name="Suzuki Y."/>
            <person name="Nishikawa T."/>
            <person name="Otsuki T."/>
            <person name="Sugiyama T."/>
            <person name="Irie R."/>
            <person name="Wakamatsu A."/>
            <person name="Hayashi K."/>
            <person name="Sato H."/>
            <person name="Nagai K."/>
            <person name="Kimura K."/>
            <person name="Makita H."/>
            <person name="Sekine M."/>
            <person name="Obayashi M."/>
            <person name="Nishi T."/>
            <person name="Shibahara T."/>
            <person name="Tanaka T."/>
            <person name="Ishii S."/>
            <person name="Yamamoto J."/>
            <person name="Saito K."/>
            <person name="Kawai Y."/>
            <person name="Isono Y."/>
            <person name="Nakamura Y."/>
            <person name="Nagahari K."/>
            <person name="Murakami K."/>
            <person name="Yasuda T."/>
            <person name="Iwayanagi T."/>
            <person name="Wagatsuma M."/>
            <person name="Shiratori A."/>
            <person name="Sudo H."/>
            <person name="Hosoiri T."/>
            <person name="Kaku Y."/>
            <person name="Kodaira H."/>
            <person name="Kondo H."/>
            <person name="Sugawara M."/>
            <person name="Takahashi M."/>
            <person name="Kanda K."/>
            <person name="Yokoi T."/>
            <person name="Furuya T."/>
            <person name="Kikkawa E."/>
            <person name="Omura Y."/>
            <person name="Abe K."/>
            <person name="Kamihara K."/>
            <person name="Katsuta N."/>
            <person name="Sato K."/>
            <person name="Tanikawa M."/>
            <person name="Yamazaki M."/>
            <person name="Ninomiya K."/>
            <person name="Ishibashi T."/>
            <person name="Yamashita H."/>
            <person name="Murakawa K."/>
            <person name="Fujimori K."/>
            <person name="Tanai H."/>
            <person name="Kimata M."/>
            <person name="Watanabe M."/>
            <person name="Hiraoka S."/>
            <person name="Chiba Y."/>
            <person name="Ishida S."/>
            <person name="Ono Y."/>
            <person name="Takiguchi S."/>
            <person name="Watanabe S."/>
            <person name="Yosida M."/>
            <person name="Hotuta T."/>
            <person name="Kusano J."/>
            <person name="Kanehori K."/>
            <person name="Takahashi-Fujii A."/>
            <person name="Hara H."/>
            <person name="Tanase T.-O."/>
            <person name="Nomura Y."/>
            <person name="Togiya S."/>
            <person name="Komai F."/>
            <person name="Hara R."/>
            <person name="Takeuchi K."/>
            <person name="Arita M."/>
            <person name="Imose N."/>
            <person name="Musashino K."/>
            <person name="Yuuki H."/>
            <person name="Oshima A."/>
            <person name="Sasaki N."/>
            <person name="Aotsuka S."/>
            <person name="Yoshikawa Y."/>
            <person name="Matsunawa H."/>
            <person name="Ichihara T."/>
            <person name="Shiohata N."/>
            <person name="Sano S."/>
            <person name="Moriya S."/>
            <person name="Momiyama H."/>
            <person name="Satoh N."/>
            <person name="Takami S."/>
            <person name="Terashima Y."/>
            <person name="Suzuki O."/>
            <person name="Nakagawa S."/>
            <person name="Senoh A."/>
            <person name="Mizoguchi H."/>
            <person name="Goto Y."/>
            <person name="Shimizu F."/>
            <person name="Wakebe H."/>
            <person name="Hishigaki H."/>
            <person name="Watanabe T."/>
            <person name="Sugiyama A."/>
            <person name="Takemoto M."/>
            <person name="Kawakami B."/>
            <person name="Yamazaki M."/>
            <person name="Watanabe K."/>
            <person name="Kumagai A."/>
            <person name="Itakura S."/>
            <person name="Fukuzumi Y."/>
            <person name="Fujimori Y."/>
            <person name="Komiyama M."/>
            <person name="Tashiro H."/>
            <person name="Tanigami A."/>
            <person name="Fujiwara T."/>
            <person name="Ono T."/>
            <person name="Yamada K."/>
            <person name="Fujii Y."/>
            <person name="Ozaki K."/>
            <person name="Hirao M."/>
            <person name="Ohmori Y."/>
            <person name="Kawabata A."/>
            <person name="Hikiji T."/>
            <person name="Kobatake N."/>
            <person name="Inagaki H."/>
            <person name="Ikema Y."/>
            <person name="Okamoto S."/>
            <person name="Okitani R."/>
            <person name="Kawakami T."/>
            <person name="Noguchi S."/>
            <person name="Itoh T."/>
            <person name="Shigeta K."/>
            <person name="Senba T."/>
            <person name="Matsumura K."/>
            <person name="Nakajima Y."/>
            <person name="Mizuno T."/>
            <person name="Morinaga M."/>
            <person name="Sasaki M."/>
            <person name="Togashi T."/>
            <person name="Oyama M."/>
            <person name="Hata H."/>
            <person name="Watanabe M."/>
            <person name="Komatsu T."/>
            <person name="Mizushima-Sugano J."/>
            <person name="Satoh T."/>
            <person name="Shirai Y."/>
            <person name="Takahashi Y."/>
            <person name="Nakagawa K."/>
            <person name="Okumura K."/>
            <person name="Nagase T."/>
            <person name="Nomura N."/>
            <person name="Kikuchi H."/>
            <person name="Masuho Y."/>
            <person name="Yamashita R."/>
            <person name="Nakai K."/>
            <person name="Yada T."/>
            <person name="Nakamura Y."/>
            <person name="Ohara O."/>
            <person name="Isogai T."/>
            <person name="Sugano S."/>
        </authorList>
    </citation>
    <scope>NUCLEOTIDE SEQUENCE [LARGE SCALE MRNA]</scope>
    <source>
        <tissue>Embryo</tissue>
    </source>
</reference>
<reference key="2">
    <citation type="submission" date="2005-09" db="EMBL/GenBank/DDBJ databases">
        <authorList>
            <person name="Mural R.J."/>
            <person name="Istrail S."/>
            <person name="Sutton G.G."/>
            <person name="Florea L."/>
            <person name="Halpern A.L."/>
            <person name="Mobarry C.M."/>
            <person name="Lippert R."/>
            <person name="Walenz B."/>
            <person name="Shatkay H."/>
            <person name="Dew I."/>
            <person name="Miller J.R."/>
            <person name="Flanigan M.J."/>
            <person name="Edwards N.J."/>
            <person name="Bolanos R."/>
            <person name="Fasulo D."/>
            <person name="Halldorsson B.V."/>
            <person name="Hannenhalli S."/>
            <person name="Turner R."/>
            <person name="Yooseph S."/>
            <person name="Lu F."/>
            <person name="Nusskern D.R."/>
            <person name="Shue B.C."/>
            <person name="Zheng X.H."/>
            <person name="Zhong F."/>
            <person name="Delcher A.L."/>
            <person name="Huson D.H."/>
            <person name="Kravitz S.A."/>
            <person name="Mouchard L."/>
            <person name="Reinert K."/>
            <person name="Remington K.A."/>
            <person name="Clark A.G."/>
            <person name="Waterman M.S."/>
            <person name="Eichler E.E."/>
            <person name="Adams M.D."/>
            <person name="Hunkapiller M.W."/>
            <person name="Myers E.W."/>
            <person name="Venter J.C."/>
        </authorList>
    </citation>
    <scope>NUCLEOTIDE SEQUENCE [LARGE SCALE GENOMIC DNA]</scope>
</reference>
<reference key="3">
    <citation type="journal article" date="2004" name="Genome Res.">
        <title>The status, quality, and expansion of the NIH full-length cDNA project: the Mammalian Gene Collection (MGC).</title>
        <authorList>
            <consortium name="The MGC Project Team"/>
        </authorList>
    </citation>
    <scope>NUCLEOTIDE SEQUENCE [LARGE SCALE MRNA]</scope>
    <source>
        <tissue>Eye</tissue>
    </source>
</reference>
<reference key="4">
    <citation type="journal article" date="2008" name="Proc. Natl. Acad. Sci. U.S.A.">
        <title>A quantitative atlas of mitotic phosphorylation.</title>
        <authorList>
            <person name="Dephoure N."/>
            <person name="Zhou C."/>
            <person name="Villen J."/>
            <person name="Beausoleil S.A."/>
            <person name="Bakalarski C.E."/>
            <person name="Elledge S.J."/>
            <person name="Gygi S.P."/>
        </authorList>
    </citation>
    <scope>IDENTIFICATION BY MASS SPECTROMETRY [LARGE SCALE ANALYSIS]</scope>
    <source>
        <tissue>Cervix carcinoma</tissue>
    </source>
</reference>
<reference key="5">
    <citation type="journal article" date="2009" name="Anal. Chem.">
        <title>Lys-N and trypsin cover complementary parts of the phosphoproteome in a refined SCX-based approach.</title>
        <authorList>
            <person name="Gauci S."/>
            <person name="Helbig A.O."/>
            <person name="Slijper M."/>
            <person name="Krijgsveld J."/>
            <person name="Heck A.J."/>
            <person name="Mohammed S."/>
        </authorList>
    </citation>
    <scope>IDENTIFICATION BY MASS SPECTROMETRY [LARGE SCALE ANALYSIS]</scope>
</reference>
<reference key="6">
    <citation type="journal article" date="2009" name="Sci. Signal.">
        <title>Quantitative phosphoproteomic analysis of T cell receptor signaling reveals system-wide modulation of protein-protein interactions.</title>
        <authorList>
            <person name="Mayya V."/>
            <person name="Lundgren D.H."/>
            <person name="Hwang S.-I."/>
            <person name="Rezaul K."/>
            <person name="Wu L."/>
            <person name="Eng J.K."/>
            <person name="Rodionov V."/>
            <person name="Han D.K."/>
        </authorList>
    </citation>
    <scope>PHOSPHORYLATION [LARGE SCALE ANALYSIS] AT SER-279</scope>
    <scope>IDENTIFICATION BY MASS SPECTROMETRY [LARGE SCALE ANALYSIS]</scope>
    <source>
        <tissue>Leukemic T-cell</tissue>
    </source>
</reference>
<reference key="7">
    <citation type="journal article" date="2013" name="J. Proteome Res.">
        <title>Toward a comprehensive characterization of a human cancer cell phosphoproteome.</title>
        <authorList>
            <person name="Zhou H."/>
            <person name="Di Palma S."/>
            <person name="Preisinger C."/>
            <person name="Peng M."/>
            <person name="Polat A.N."/>
            <person name="Heck A.J."/>
            <person name="Mohammed S."/>
        </authorList>
    </citation>
    <scope>PHOSPHORYLATION [LARGE SCALE ANALYSIS] AT SER-154 AND SER-157</scope>
    <scope>IDENTIFICATION BY MASS SPECTROMETRY [LARGE SCALE ANALYSIS]</scope>
    <source>
        <tissue>Cervix carcinoma</tissue>
        <tissue>Erythroleukemia</tissue>
    </source>
</reference>
<dbReference type="EMBL" id="AK001022">
    <property type="protein sequence ID" value="BAG50849.1"/>
    <property type="molecule type" value="mRNA"/>
</dbReference>
<dbReference type="EMBL" id="CH471136">
    <property type="protein sequence ID" value="EAW99220.1"/>
    <property type="molecule type" value="Genomic_DNA"/>
</dbReference>
<dbReference type="EMBL" id="BC011967">
    <property type="protein sequence ID" value="AAH11967.1"/>
    <property type="molecule type" value="mRNA"/>
</dbReference>
<dbReference type="EMBL" id="BC012136">
    <property type="protein sequence ID" value="AAH12136.1"/>
    <property type="molecule type" value="mRNA"/>
</dbReference>
<dbReference type="CCDS" id="CCDS10290.1"/>
<dbReference type="RefSeq" id="NP_665804.1">
    <property type="nucleotide sequence ID" value="NM_145805.3"/>
</dbReference>
<dbReference type="SMR" id="Q96A47"/>
<dbReference type="BioGRID" id="122318">
    <property type="interactions" value="41"/>
</dbReference>
<dbReference type="FunCoup" id="Q96A47">
    <property type="interactions" value="961"/>
</dbReference>
<dbReference type="IntAct" id="Q96A47">
    <property type="interactions" value="33"/>
</dbReference>
<dbReference type="MINT" id="Q96A47"/>
<dbReference type="STRING" id="9606.ENSP00000290759"/>
<dbReference type="iPTMnet" id="Q96A47"/>
<dbReference type="PhosphoSitePlus" id="Q96A47"/>
<dbReference type="BioMuta" id="ISL2"/>
<dbReference type="DMDM" id="20978495"/>
<dbReference type="jPOST" id="Q96A47"/>
<dbReference type="MassIVE" id="Q96A47"/>
<dbReference type="PaxDb" id="9606-ENSP00000290759"/>
<dbReference type="PeptideAtlas" id="Q96A47"/>
<dbReference type="ProteomicsDB" id="75911"/>
<dbReference type="Pumba" id="Q96A47"/>
<dbReference type="Antibodypedia" id="27431">
    <property type="antibodies" value="230 antibodies from 29 providers"/>
</dbReference>
<dbReference type="DNASU" id="64843"/>
<dbReference type="Ensembl" id="ENST00000290759.9">
    <property type="protein sequence ID" value="ENSP00000290759.4"/>
    <property type="gene ID" value="ENSG00000159556.10"/>
</dbReference>
<dbReference type="GeneID" id="64843"/>
<dbReference type="KEGG" id="hsa:64843"/>
<dbReference type="MANE-Select" id="ENST00000290759.9">
    <property type="protein sequence ID" value="ENSP00000290759.4"/>
    <property type="RefSeq nucleotide sequence ID" value="NM_145805.3"/>
    <property type="RefSeq protein sequence ID" value="NP_665804.1"/>
</dbReference>
<dbReference type="UCSC" id="uc002bbw.2">
    <property type="organism name" value="human"/>
</dbReference>
<dbReference type="AGR" id="HGNC:18524"/>
<dbReference type="CTD" id="64843"/>
<dbReference type="DisGeNET" id="64843"/>
<dbReference type="GeneCards" id="ISL2"/>
<dbReference type="HGNC" id="HGNC:18524">
    <property type="gene designation" value="ISL2"/>
</dbReference>
<dbReference type="HPA" id="ENSG00000159556">
    <property type="expression patterns" value="Tissue enhanced (pituitary gland, prostate, vagina)"/>
</dbReference>
<dbReference type="MIM" id="609481">
    <property type="type" value="gene"/>
</dbReference>
<dbReference type="neXtProt" id="NX_Q96A47"/>
<dbReference type="OpenTargets" id="ENSG00000159556"/>
<dbReference type="PharmGKB" id="PA38566"/>
<dbReference type="VEuPathDB" id="HostDB:ENSG00000159556"/>
<dbReference type="eggNOG" id="KOG0490">
    <property type="taxonomic scope" value="Eukaryota"/>
</dbReference>
<dbReference type="GeneTree" id="ENSGT00940000153731"/>
<dbReference type="HOGENOM" id="CLU_027802_2_0_1"/>
<dbReference type="InParanoid" id="Q96A47"/>
<dbReference type="OMA" id="AMHPNEV"/>
<dbReference type="OrthoDB" id="125004at2759"/>
<dbReference type="PAN-GO" id="Q96A47">
    <property type="GO annotations" value="6 GO annotations based on evolutionary models"/>
</dbReference>
<dbReference type="PhylomeDB" id="Q96A47"/>
<dbReference type="TreeFam" id="TF315442"/>
<dbReference type="PathwayCommons" id="Q96A47"/>
<dbReference type="SignaLink" id="Q96A47"/>
<dbReference type="SIGNOR" id="Q96A47"/>
<dbReference type="BioGRID-ORCS" id="64843">
    <property type="hits" value="17 hits in 1179 CRISPR screens"/>
</dbReference>
<dbReference type="GenomeRNAi" id="64843"/>
<dbReference type="Pharos" id="Q96A47">
    <property type="development level" value="Tbio"/>
</dbReference>
<dbReference type="PRO" id="PR:Q96A47"/>
<dbReference type="Proteomes" id="UP000005640">
    <property type="component" value="Chromosome 15"/>
</dbReference>
<dbReference type="RNAct" id="Q96A47">
    <property type="molecule type" value="protein"/>
</dbReference>
<dbReference type="Bgee" id="ENSG00000159556">
    <property type="expression patterns" value="Expressed in primordial germ cell in gonad and 65 other cell types or tissues"/>
</dbReference>
<dbReference type="ExpressionAtlas" id="Q96A47">
    <property type="expression patterns" value="baseline and differential"/>
</dbReference>
<dbReference type="GO" id="GO:0000785">
    <property type="term" value="C:chromatin"/>
    <property type="evidence" value="ECO:0000247"/>
    <property type="project" value="NTNU_SB"/>
</dbReference>
<dbReference type="GO" id="GO:0005634">
    <property type="term" value="C:nucleus"/>
    <property type="evidence" value="ECO:0000318"/>
    <property type="project" value="GO_Central"/>
</dbReference>
<dbReference type="GO" id="GO:0000987">
    <property type="term" value="F:cis-regulatory region sequence-specific DNA binding"/>
    <property type="evidence" value="ECO:0000318"/>
    <property type="project" value="GO_Central"/>
</dbReference>
<dbReference type="GO" id="GO:0003677">
    <property type="term" value="F:DNA binding"/>
    <property type="evidence" value="ECO:0000250"/>
    <property type="project" value="BHF-UCL"/>
</dbReference>
<dbReference type="GO" id="GO:0000981">
    <property type="term" value="F:DNA-binding transcription factor activity, RNA polymerase II-specific"/>
    <property type="evidence" value="ECO:0000247"/>
    <property type="project" value="NTNU_SB"/>
</dbReference>
<dbReference type="GO" id="GO:0046872">
    <property type="term" value="F:metal ion binding"/>
    <property type="evidence" value="ECO:0007669"/>
    <property type="project" value="UniProtKB-KW"/>
</dbReference>
<dbReference type="GO" id="GO:1990837">
    <property type="term" value="F:sequence-specific double-stranded DNA binding"/>
    <property type="evidence" value="ECO:0000314"/>
    <property type="project" value="ARUK-UCL"/>
</dbReference>
<dbReference type="GO" id="GO:0007409">
    <property type="term" value="P:axonogenesis"/>
    <property type="evidence" value="ECO:0000318"/>
    <property type="project" value="GO_Central"/>
</dbReference>
<dbReference type="GO" id="GO:0045665">
    <property type="term" value="P:negative regulation of neuron differentiation"/>
    <property type="evidence" value="ECO:0007669"/>
    <property type="project" value="Ensembl"/>
</dbReference>
<dbReference type="GO" id="GO:0048666">
    <property type="term" value="P:neuron development"/>
    <property type="evidence" value="ECO:0000304"/>
    <property type="project" value="BHF-UCL"/>
</dbReference>
<dbReference type="GO" id="GO:0048665">
    <property type="term" value="P:neuron fate specification"/>
    <property type="evidence" value="ECO:0000318"/>
    <property type="project" value="GO_Central"/>
</dbReference>
<dbReference type="GO" id="GO:0048935">
    <property type="term" value="P:peripheral nervous system neuron development"/>
    <property type="evidence" value="ECO:0000304"/>
    <property type="project" value="BHF-UCL"/>
</dbReference>
<dbReference type="GO" id="GO:0045944">
    <property type="term" value="P:positive regulation of transcription by RNA polymerase II"/>
    <property type="evidence" value="ECO:0000318"/>
    <property type="project" value="GO_Central"/>
</dbReference>
<dbReference type="GO" id="GO:0031290">
    <property type="term" value="P:retinal ganglion cell axon guidance"/>
    <property type="evidence" value="ECO:0007669"/>
    <property type="project" value="Ensembl"/>
</dbReference>
<dbReference type="GO" id="GO:0021520">
    <property type="term" value="P:spinal cord motor neuron cell fate specification"/>
    <property type="evidence" value="ECO:0007669"/>
    <property type="project" value="Ensembl"/>
</dbReference>
<dbReference type="GO" id="GO:0021524">
    <property type="term" value="P:visceral motor neuron differentiation"/>
    <property type="evidence" value="ECO:0007669"/>
    <property type="project" value="Ensembl"/>
</dbReference>
<dbReference type="CDD" id="cd00086">
    <property type="entry name" value="homeodomain"/>
    <property type="match status" value="1"/>
</dbReference>
<dbReference type="CDD" id="cd09366">
    <property type="entry name" value="LIM1_Isl"/>
    <property type="match status" value="1"/>
</dbReference>
<dbReference type="CDD" id="cd09471">
    <property type="entry name" value="LIM2_Isl2"/>
    <property type="match status" value="1"/>
</dbReference>
<dbReference type="FunFam" id="2.10.110.10:FF:000034">
    <property type="entry name" value="Insulin gene enhancer protein ISL"/>
    <property type="match status" value="1"/>
</dbReference>
<dbReference type="FunFam" id="1.10.10.60:FF:000041">
    <property type="entry name" value="insulin gene enhancer protein ISL-1"/>
    <property type="match status" value="1"/>
</dbReference>
<dbReference type="FunFam" id="2.10.110.10:FF:000068">
    <property type="entry name" value="Insulin gene enhancer protein ISL-2"/>
    <property type="match status" value="1"/>
</dbReference>
<dbReference type="Gene3D" id="2.10.110.10">
    <property type="entry name" value="Cysteine Rich Protein"/>
    <property type="match status" value="2"/>
</dbReference>
<dbReference type="Gene3D" id="1.10.10.60">
    <property type="entry name" value="Homeodomain-like"/>
    <property type="match status" value="1"/>
</dbReference>
<dbReference type="InterPro" id="IPR001356">
    <property type="entry name" value="HD"/>
</dbReference>
<dbReference type="InterPro" id="IPR017970">
    <property type="entry name" value="Homeobox_CS"/>
</dbReference>
<dbReference type="InterPro" id="IPR009057">
    <property type="entry name" value="Homeodomain-like_sf"/>
</dbReference>
<dbReference type="InterPro" id="IPR047169">
    <property type="entry name" value="ISL1/2-like"/>
</dbReference>
<dbReference type="InterPro" id="IPR047244">
    <property type="entry name" value="ISL1/2-like_LIM1"/>
</dbReference>
<dbReference type="InterPro" id="IPR001781">
    <property type="entry name" value="Znf_LIM"/>
</dbReference>
<dbReference type="PANTHER" id="PTHR24204">
    <property type="entry name" value="INSULIN GENE ENHANCER PROTEIN"/>
    <property type="match status" value="1"/>
</dbReference>
<dbReference type="PANTHER" id="PTHR24204:SF2">
    <property type="entry name" value="INSULIN GENE ENHANCER PROTEIN ISL-2"/>
    <property type="match status" value="1"/>
</dbReference>
<dbReference type="Pfam" id="PF00046">
    <property type="entry name" value="Homeodomain"/>
    <property type="match status" value="1"/>
</dbReference>
<dbReference type="Pfam" id="PF00412">
    <property type="entry name" value="LIM"/>
    <property type="match status" value="2"/>
</dbReference>
<dbReference type="SMART" id="SM00389">
    <property type="entry name" value="HOX"/>
    <property type="match status" value="1"/>
</dbReference>
<dbReference type="SMART" id="SM00132">
    <property type="entry name" value="LIM"/>
    <property type="match status" value="2"/>
</dbReference>
<dbReference type="SUPFAM" id="SSF57716">
    <property type="entry name" value="Glucocorticoid receptor-like (DNA-binding domain)"/>
    <property type="match status" value="2"/>
</dbReference>
<dbReference type="SUPFAM" id="SSF46689">
    <property type="entry name" value="Homeodomain-like"/>
    <property type="match status" value="1"/>
</dbReference>
<dbReference type="PROSITE" id="PS00027">
    <property type="entry name" value="HOMEOBOX_1"/>
    <property type="match status" value="1"/>
</dbReference>
<dbReference type="PROSITE" id="PS50071">
    <property type="entry name" value="HOMEOBOX_2"/>
    <property type="match status" value="1"/>
</dbReference>
<dbReference type="PROSITE" id="PS00478">
    <property type="entry name" value="LIM_DOMAIN_1"/>
    <property type="match status" value="2"/>
</dbReference>
<dbReference type="PROSITE" id="PS50023">
    <property type="entry name" value="LIM_DOMAIN_2"/>
    <property type="match status" value="2"/>
</dbReference>
<keyword id="KW-0217">Developmental protein</keyword>
<keyword id="KW-0238">DNA-binding</keyword>
<keyword id="KW-0371">Homeobox</keyword>
<keyword id="KW-0440">LIM domain</keyword>
<keyword id="KW-0479">Metal-binding</keyword>
<keyword id="KW-0539">Nucleus</keyword>
<keyword id="KW-0597">Phosphoprotein</keyword>
<keyword id="KW-1267">Proteomics identification</keyword>
<keyword id="KW-1185">Reference proteome</keyword>
<keyword id="KW-0677">Repeat</keyword>
<keyword id="KW-0862">Zinc</keyword>
<evidence type="ECO:0000250" key="1"/>
<evidence type="ECO:0000255" key="2">
    <source>
        <dbReference type="PROSITE-ProRule" id="PRU00108"/>
    </source>
</evidence>
<evidence type="ECO:0000255" key="3">
    <source>
        <dbReference type="PROSITE-ProRule" id="PRU00125"/>
    </source>
</evidence>
<evidence type="ECO:0000256" key="4">
    <source>
        <dbReference type="SAM" id="MobiDB-lite"/>
    </source>
</evidence>
<evidence type="ECO:0007744" key="5">
    <source>
    </source>
</evidence>
<evidence type="ECO:0007744" key="6">
    <source>
    </source>
</evidence>
<gene>
    <name type="primary">ISL2</name>
</gene>
<comment type="function">
    <text evidence="1">Transcriptional factor that defines subclasses of motoneurons that segregate into columns in the spinal cord and select distinct axon pathways.</text>
</comment>
<comment type="subunit">
    <text evidence="1">Interacts with LHX4.</text>
</comment>
<comment type="interaction">
    <interactant intactId="EBI-18560216">
        <id>Q96A47</id>
    </interactant>
    <interactant intactId="EBI-11979761">
        <id>Q86U70-2</id>
        <label>LDB1</label>
    </interactant>
    <organismsDiffer>false</organismsDiffer>
    <experiments>3</experiments>
</comment>
<comment type="interaction">
    <interactant intactId="EBI-18560216">
        <id>Q96A47</id>
    </interactant>
    <interactant intactId="EBI-2865388">
        <id>Q969G2</id>
        <label>LHX4</label>
    </interactant>
    <organismsDiffer>false</organismsDiffer>
    <experiments>5</experiments>
</comment>
<comment type="subcellular location">
    <subcellularLocation>
        <location evidence="2">Nucleus</location>
    </subcellularLocation>
</comment>